<evidence type="ECO:0000269" key="1">
    <source>
    </source>
</evidence>
<evidence type="ECO:0000303" key="2">
    <source>
    </source>
</evidence>
<evidence type="ECO:0000305" key="3"/>
<reference evidence="3" key="1">
    <citation type="journal article" date="2009" name="Peptides">
        <title>Neuropeptides in Heteroptera: identification of allatotropin-related peptide and tachykinin-related peptides using MALDI-TOF mass spectrometry.</title>
        <authorList>
            <person name="Neupert S."/>
            <person name="Russell W.K."/>
            <person name="Russell D.H."/>
            <person name="Lopez J.D. Jr."/>
            <person name="Predel R."/>
            <person name="Nachman R.J."/>
        </authorList>
    </citation>
    <scope>PROTEIN SEQUENCE</scope>
    <scope>SUBCELLULAR LOCATION</scope>
    <scope>TISSUE SPECIFICITY</scope>
    <scope>AMIDATION AT ARG-10</scope>
    <source>
        <tissue evidence="1">Antennal lobe</tissue>
    </source>
</reference>
<protein>
    <recommendedName>
        <fullName evidence="2">Tachykinin-related peptide 3</fullName>
        <shortName evidence="2">TKRP-3</shortName>
    </recommendedName>
</protein>
<comment type="subcellular location">
    <subcellularLocation>
        <location evidence="1 3">Secreted</location>
    </subcellularLocation>
</comment>
<comment type="tissue specificity">
    <text evidence="1">Expressed in the antennal lobe (at protein level).</text>
</comment>
<name>TRP3_BANDI</name>
<feature type="peptide" id="PRO_0000395634" description="Tachykinin-related peptide 3" evidence="1">
    <location>
        <begin position="1"/>
        <end position="10"/>
    </location>
</feature>
<feature type="modified residue" description="Arginine amide" evidence="1">
    <location>
        <position position="10"/>
    </location>
</feature>
<dbReference type="GO" id="GO:0005576">
    <property type="term" value="C:extracellular region"/>
    <property type="evidence" value="ECO:0007005"/>
    <property type="project" value="UniProtKB"/>
</dbReference>
<dbReference type="GO" id="GO:0007218">
    <property type="term" value="P:neuropeptide signaling pathway"/>
    <property type="evidence" value="ECO:0007669"/>
    <property type="project" value="UniProtKB-KW"/>
</dbReference>
<sequence length="10" mass="1042">GPSSGFFGMR</sequence>
<accession>P86565</accession>
<organism>
    <name type="scientific">Banasa dimiata</name>
    <name type="common">Banasa stink bug</name>
    <name type="synonym">Pentatoma dimiata</name>
    <dbReference type="NCBI Taxonomy" id="756487"/>
    <lineage>
        <taxon>Eukaryota</taxon>
        <taxon>Metazoa</taxon>
        <taxon>Ecdysozoa</taxon>
        <taxon>Arthropoda</taxon>
        <taxon>Hexapoda</taxon>
        <taxon>Insecta</taxon>
        <taxon>Pterygota</taxon>
        <taxon>Neoptera</taxon>
        <taxon>Paraneoptera</taxon>
        <taxon>Hemiptera</taxon>
        <taxon>Heteroptera</taxon>
        <taxon>Panheteroptera</taxon>
        <taxon>Pentatomomorpha</taxon>
        <taxon>Pentatomoidea</taxon>
        <taxon>Pentatomidae</taxon>
        <taxon>Pentatominae</taxon>
        <taxon>Banasa</taxon>
    </lineage>
</organism>
<keyword id="KW-0027">Amidation</keyword>
<keyword id="KW-0903">Direct protein sequencing</keyword>
<keyword id="KW-0527">Neuropeptide</keyword>
<keyword id="KW-0964">Secreted</keyword>
<proteinExistence type="evidence at protein level"/>